<feature type="chain" id="PRO_0000264567" description="DNA-directed RNA polymerase subunit alpha">
    <location>
        <begin position="1"/>
        <end position="314"/>
    </location>
</feature>
<feature type="region of interest" description="Alpha N-terminal domain (alpha-NTD)" evidence="1">
    <location>
        <begin position="1"/>
        <end position="228"/>
    </location>
</feature>
<feature type="region of interest" description="Alpha C-terminal domain (alpha-CTD)" evidence="1">
    <location>
        <begin position="240"/>
        <end position="314"/>
    </location>
</feature>
<reference key="1">
    <citation type="journal article" date="2015" name="Proc. Natl. Acad. Sci. U.S.A.">
        <title>Trichodesmium genome maintains abundant, widespread noncoding DNA in situ, despite oligotrophic lifestyle.</title>
        <authorList>
            <person name="Walworth N."/>
            <person name="Pfreundt U."/>
            <person name="Nelson W.C."/>
            <person name="Mincer T."/>
            <person name="Heidelberg J.F."/>
            <person name="Fu F."/>
            <person name="Waterbury J.B."/>
            <person name="Glavina del Rio T."/>
            <person name="Goodwin L."/>
            <person name="Kyrpides N.C."/>
            <person name="Land M.L."/>
            <person name="Woyke T."/>
            <person name="Hutchins D.A."/>
            <person name="Hess W.R."/>
            <person name="Webb E.A."/>
        </authorList>
    </citation>
    <scope>NUCLEOTIDE SEQUENCE [LARGE SCALE GENOMIC DNA]</scope>
    <source>
        <strain>IMS101</strain>
    </source>
</reference>
<proteinExistence type="inferred from homology"/>
<evidence type="ECO:0000255" key="1">
    <source>
        <dbReference type="HAMAP-Rule" id="MF_00059"/>
    </source>
</evidence>
<evidence type="ECO:0000305" key="2"/>
<protein>
    <recommendedName>
        <fullName evidence="1">DNA-directed RNA polymerase subunit alpha</fullName>
        <shortName evidence="1">RNAP subunit alpha</shortName>
        <ecNumber evidence="1">2.7.7.6</ecNumber>
    </recommendedName>
    <alternativeName>
        <fullName evidence="1">RNA polymerase subunit alpha</fullName>
    </alternativeName>
    <alternativeName>
        <fullName evidence="1">Transcriptase subunit alpha</fullName>
    </alternativeName>
</protein>
<sequence>MAQFHYECVESKTDKDRSQYGKFIIEPLARGQGTTVGNALRRVLLSNLEGTAITSVRIAGVNHEFATIKGVREDVLEILLNMKEVVLKSYSEQPQIGRLRVEGPATVTADRFDVPSEVEVIDRSQYIATLSPGSILEMEFRIEKGTGYKAVDRTRDDVATLDFLQIDAIFMPVRKVNYTIEDAHIGSSLEQDRLIMDIWTNGSYTPQDALSNAAGILMSLFEPLKDITNMADIPSGETTDPTSQIPIEELQLSVRAYNCLKRAQINSVADLLDYSQEDLLEIKNFGQKSAEEVIEALQKRLGITLPQEKVAKAT</sequence>
<keyword id="KW-0240">DNA-directed RNA polymerase</keyword>
<keyword id="KW-0548">Nucleotidyltransferase</keyword>
<keyword id="KW-0804">Transcription</keyword>
<keyword id="KW-0808">Transferase</keyword>
<accession>Q110D1</accession>
<comment type="function">
    <text evidence="1">DNA-dependent RNA polymerase catalyzes the transcription of DNA into RNA using the four ribonucleoside triphosphates as substrates.</text>
</comment>
<comment type="catalytic activity">
    <reaction evidence="1">
        <text>RNA(n) + a ribonucleoside 5'-triphosphate = RNA(n+1) + diphosphate</text>
        <dbReference type="Rhea" id="RHEA:21248"/>
        <dbReference type="Rhea" id="RHEA-COMP:14527"/>
        <dbReference type="Rhea" id="RHEA-COMP:17342"/>
        <dbReference type="ChEBI" id="CHEBI:33019"/>
        <dbReference type="ChEBI" id="CHEBI:61557"/>
        <dbReference type="ChEBI" id="CHEBI:140395"/>
        <dbReference type="EC" id="2.7.7.6"/>
    </reaction>
</comment>
<comment type="subunit">
    <text evidence="1">In cyanobacteria the RNAP catalytic core is composed of 2 alpha, 1 beta, 1 beta', 1 gamma and 1 omega subunit. When a sigma factor is associated with the core the holoenzyme is formed, which can initiate transcription.</text>
</comment>
<comment type="domain">
    <text evidence="1">The N-terminal domain is essential for RNAP assembly and basal transcription, whereas the C-terminal domain is involved in interaction with transcriptional regulators and with upstream promoter elements.</text>
</comment>
<comment type="similarity">
    <text evidence="1">Belongs to the RNA polymerase alpha chain family.</text>
</comment>
<comment type="sequence caution" evidence="2">
    <conflict type="erroneous initiation">
        <sequence resource="EMBL-CDS" id="ABG52143"/>
    </conflict>
</comment>
<organism>
    <name type="scientific">Trichodesmium erythraeum (strain IMS101)</name>
    <dbReference type="NCBI Taxonomy" id="203124"/>
    <lineage>
        <taxon>Bacteria</taxon>
        <taxon>Bacillati</taxon>
        <taxon>Cyanobacteriota</taxon>
        <taxon>Cyanophyceae</taxon>
        <taxon>Oscillatoriophycideae</taxon>
        <taxon>Oscillatoriales</taxon>
        <taxon>Microcoleaceae</taxon>
        <taxon>Trichodesmium</taxon>
    </lineage>
</organism>
<gene>
    <name evidence="1" type="primary">rpoA</name>
    <name type="ordered locus">Tery_2988</name>
</gene>
<dbReference type="EC" id="2.7.7.6" evidence="1"/>
<dbReference type="EMBL" id="CP000393">
    <property type="protein sequence ID" value="ABG52143.1"/>
    <property type="status" value="ALT_INIT"/>
    <property type="molecule type" value="Genomic_DNA"/>
</dbReference>
<dbReference type="RefSeq" id="WP_011612499.1">
    <property type="nucleotide sequence ID" value="NC_008312.1"/>
</dbReference>
<dbReference type="SMR" id="Q110D1"/>
<dbReference type="STRING" id="203124.Tery_2988"/>
<dbReference type="KEGG" id="ter:Tery_2988"/>
<dbReference type="eggNOG" id="COG0202">
    <property type="taxonomic scope" value="Bacteria"/>
</dbReference>
<dbReference type="HOGENOM" id="CLU_053084_0_1_3"/>
<dbReference type="GO" id="GO:0005737">
    <property type="term" value="C:cytoplasm"/>
    <property type="evidence" value="ECO:0007669"/>
    <property type="project" value="UniProtKB-ARBA"/>
</dbReference>
<dbReference type="GO" id="GO:0000428">
    <property type="term" value="C:DNA-directed RNA polymerase complex"/>
    <property type="evidence" value="ECO:0007669"/>
    <property type="project" value="UniProtKB-KW"/>
</dbReference>
<dbReference type="GO" id="GO:0003677">
    <property type="term" value="F:DNA binding"/>
    <property type="evidence" value="ECO:0007669"/>
    <property type="project" value="UniProtKB-UniRule"/>
</dbReference>
<dbReference type="GO" id="GO:0003899">
    <property type="term" value="F:DNA-directed RNA polymerase activity"/>
    <property type="evidence" value="ECO:0007669"/>
    <property type="project" value="UniProtKB-UniRule"/>
</dbReference>
<dbReference type="GO" id="GO:0046983">
    <property type="term" value="F:protein dimerization activity"/>
    <property type="evidence" value="ECO:0007669"/>
    <property type="project" value="InterPro"/>
</dbReference>
<dbReference type="GO" id="GO:0006351">
    <property type="term" value="P:DNA-templated transcription"/>
    <property type="evidence" value="ECO:0007669"/>
    <property type="project" value="UniProtKB-UniRule"/>
</dbReference>
<dbReference type="CDD" id="cd06928">
    <property type="entry name" value="RNAP_alpha_NTD"/>
    <property type="match status" value="1"/>
</dbReference>
<dbReference type="FunFam" id="1.10.150.20:FF:000120">
    <property type="entry name" value="DNA-directed RNA polymerase subunit alpha"/>
    <property type="match status" value="1"/>
</dbReference>
<dbReference type="FunFam" id="2.170.120.12:FF:000001">
    <property type="entry name" value="DNA-directed RNA polymerase subunit alpha"/>
    <property type="match status" value="1"/>
</dbReference>
<dbReference type="Gene3D" id="1.10.150.20">
    <property type="entry name" value="5' to 3' exonuclease, C-terminal subdomain"/>
    <property type="match status" value="1"/>
</dbReference>
<dbReference type="Gene3D" id="2.170.120.12">
    <property type="entry name" value="DNA-directed RNA polymerase, insert domain"/>
    <property type="match status" value="1"/>
</dbReference>
<dbReference type="Gene3D" id="3.30.1360.10">
    <property type="entry name" value="RNA polymerase, RBP11-like subunit"/>
    <property type="match status" value="1"/>
</dbReference>
<dbReference type="HAMAP" id="MF_00059">
    <property type="entry name" value="RNApol_bact_RpoA"/>
    <property type="match status" value="1"/>
</dbReference>
<dbReference type="InterPro" id="IPR011262">
    <property type="entry name" value="DNA-dir_RNA_pol_insert"/>
</dbReference>
<dbReference type="InterPro" id="IPR011263">
    <property type="entry name" value="DNA-dir_RNA_pol_RpoA/D/Rpb3"/>
</dbReference>
<dbReference type="InterPro" id="IPR011773">
    <property type="entry name" value="DNA-dir_RpoA"/>
</dbReference>
<dbReference type="InterPro" id="IPR036603">
    <property type="entry name" value="RBP11-like"/>
</dbReference>
<dbReference type="InterPro" id="IPR011260">
    <property type="entry name" value="RNAP_asu_C"/>
</dbReference>
<dbReference type="InterPro" id="IPR036643">
    <property type="entry name" value="RNApol_insert_sf"/>
</dbReference>
<dbReference type="NCBIfam" id="NF003513">
    <property type="entry name" value="PRK05182.1-2"/>
    <property type="match status" value="1"/>
</dbReference>
<dbReference type="NCBIfam" id="NF003516">
    <property type="entry name" value="PRK05182.2-2"/>
    <property type="match status" value="1"/>
</dbReference>
<dbReference type="NCBIfam" id="NF003519">
    <property type="entry name" value="PRK05182.2-5"/>
    <property type="match status" value="1"/>
</dbReference>
<dbReference type="NCBIfam" id="TIGR02027">
    <property type="entry name" value="rpoA"/>
    <property type="match status" value="1"/>
</dbReference>
<dbReference type="Pfam" id="PF01000">
    <property type="entry name" value="RNA_pol_A_bac"/>
    <property type="match status" value="1"/>
</dbReference>
<dbReference type="Pfam" id="PF03118">
    <property type="entry name" value="RNA_pol_A_CTD"/>
    <property type="match status" value="1"/>
</dbReference>
<dbReference type="Pfam" id="PF01193">
    <property type="entry name" value="RNA_pol_L"/>
    <property type="match status" value="1"/>
</dbReference>
<dbReference type="SMART" id="SM00662">
    <property type="entry name" value="RPOLD"/>
    <property type="match status" value="1"/>
</dbReference>
<dbReference type="SUPFAM" id="SSF47789">
    <property type="entry name" value="C-terminal domain of RNA polymerase alpha subunit"/>
    <property type="match status" value="1"/>
</dbReference>
<dbReference type="SUPFAM" id="SSF56553">
    <property type="entry name" value="Insert subdomain of RNA polymerase alpha subunit"/>
    <property type="match status" value="1"/>
</dbReference>
<dbReference type="SUPFAM" id="SSF55257">
    <property type="entry name" value="RBP11-like subunits of RNA polymerase"/>
    <property type="match status" value="1"/>
</dbReference>
<name>RPOA_TRIEI</name>